<dbReference type="EMBL" id="AY398371">
    <property type="protein sequence ID" value="AAQ97804.1"/>
    <property type="molecule type" value="mRNA"/>
</dbReference>
<dbReference type="EMBL" id="BC045308">
    <property type="protein sequence ID" value="AAH45308.1"/>
    <property type="molecule type" value="mRNA"/>
</dbReference>
<dbReference type="RefSeq" id="NP_955998.1">
    <property type="nucleotide sequence ID" value="NM_199704.1"/>
</dbReference>
<dbReference type="RefSeq" id="XP_005159039.1">
    <property type="nucleotide sequence ID" value="XM_005158982.5"/>
</dbReference>
<dbReference type="SMR" id="Q7ZW33"/>
<dbReference type="FunCoup" id="Q7ZW33">
    <property type="interactions" value="1849"/>
</dbReference>
<dbReference type="STRING" id="7955.ENSDARP00000106434"/>
<dbReference type="PaxDb" id="7955-ENSDARP00000106434"/>
<dbReference type="Ensembl" id="ENSDART00000127397">
    <property type="protein sequence ID" value="ENSDARP00000106434"/>
    <property type="gene ID" value="ENSDARG00000002720"/>
</dbReference>
<dbReference type="Ensembl" id="ENSDART00000148774">
    <property type="protein sequence ID" value="ENSDARP00000124648"/>
    <property type="gene ID" value="ENSDARG00000002720"/>
</dbReference>
<dbReference type="GeneID" id="325106"/>
<dbReference type="KEGG" id="dre:325106"/>
<dbReference type="AGR" id="ZFIN:ZDB-GENE-030131-3831"/>
<dbReference type="CTD" id="84135"/>
<dbReference type="ZFIN" id="ZDB-GENE-030131-3831">
    <property type="gene designation" value="utp15"/>
</dbReference>
<dbReference type="eggNOG" id="KOG0310">
    <property type="taxonomic scope" value="Eukaryota"/>
</dbReference>
<dbReference type="HOGENOM" id="CLU_021102_4_0_1"/>
<dbReference type="InParanoid" id="Q7ZW33"/>
<dbReference type="OMA" id="ATYQVVH"/>
<dbReference type="OrthoDB" id="431715at2759"/>
<dbReference type="PhylomeDB" id="Q7ZW33"/>
<dbReference type="TreeFam" id="TF319494"/>
<dbReference type="PRO" id="PR:Q7ZW33"/>
<dbReference type="Proteomes" id="UP000000437">
    <property type="component" value="Chromosome 18"/>
</dbReference>
<dbReference type="Bgee" id="ENSDARG00000002720">
    <property type="expression patterns" value="Expressed in gastrula and 28 other cell types or tissues"/>
</dbReference>
<dbReference type="GO" id="GO:0005730">
    <property type="term" value="C:nucleolus"/>
    <property type="evidence" value="ECO:0000318"/>
    <property type="project" value="GO_Central"/>
</dbReference>
<dbReference type="GO" id="GO:0032040">
    <property type="term" value="C:small-subunit processome"/>
    <property type="evidence" value="ECO:0000250"/>
    <property type="project" value="UniProtKB"/>
</dbReference>
<dbReference type="GO" id="GO:0045766">
    <property type="term" value="P:positive regulation of angiogenesis"/>
    <property type="evidence" value="ECO:0000316"/>
    <property type="project" value="ZFIN"/>
</dbReference>
<dbReference type="GO" id="GO:0045943">
    <property type="term" value="P:positive regulation of transcription by RNA polymerase I"/>
    <property type="evidence" value="ECO:0000318"/>
    <property type="project" value="GO_Central"/>
</dbReference>
<dbReference type="GO" id="GO:0042274">
    <property type="term" value="P:ribosomal small subunit biogenesis"/>
    <property type="evidence" value="ECO:0000250"/>
    <property type="project" value="UniProtKB"/>
</dbReference>
<dbReference type="GO" id="GO:0006364">
    <property type="term" value="P:rRNA processing"/>
    <property type="evidence" value="ECO:0000318"/>
    <property type="project" value="GO_Central"/>
</dbReference>
<dbReference type="CDD" id="cd00200">
    <property type="entry name" value="WD40"/>
    <property type="match status" value="1"/>
</dbReference>
<dbReference type="FunFam" id="2.130.10.10:FF:000978">
    <property type="entry name" value="U3 small nucleolar RNA-associated protein 15 homolog"/>
    <property type="match status" value="1"/>
</dbReference>
<dbReference type="FunFam" id="2.130.10.10:FF:002886">
    <property type="entry name" value="U3 small nucleolar RNA-associated protein 15 homolog"/>
    <property type="match status" value="1"/>
</dbReference>
<dbReference type="Gene3D" id="2.130.10.10">
    <property type="entry name" value="YVTN repeat-like/Quinoprotein amine dehydrogenase"/>
    <property type="match status" value="2"/>
</dbReference>
<dbReference type="InterPro" id="IPR018983">
    <property type="entry name" value="U3_snoRNA-assocProt_15_C"/>
</dbReference>
<dbReference type="InterPro" id="IPR015943">
    <property type="entry name" value="WD40/YVTN_repeat-like_dom_sf"/>
</dbReference>
<dbReference type="InterPro" id="IPR019775">
    <property type="entry name" value="WD40_repeat_CS"/>
</dbReference>
<dbReference type="InterPro" id="IPR036322">
    <property type="entry name" value="WD40_repeat_dom_sf"/>
</dbReference>
<dbReference type="InterPro" id="IPR001680">
    <property type="entry name" value="WD40_rpt"/>
</dbReference>
<dbReference type="PANTHER" id="PTHR19924:SF26">
    <property type="entry name" value="U3 SMALL NUCLEOLAR RNA-ASSOCIATED PROTEIN 15 HOMOLOG"/>
    <property type="match status" value="1"/>
</dbReference>
<dbReference type="PANTHER" id="PTHR19924">
    <property type="entry name" value="UTP15 U3 SMALL NUCLEOLAR RNA-ASSOCIATED PROTEIN 15 FAMILY MEMBER"/>
    <property type="match status" value="1"/>
</dbReference>
<dbReference type="Pfam" id="PF09384">
    <property type="entry name" value="UTP15_C"/>
    <property type="match status" value="1"/>
</dbReference>
<dbReference type="Pfam" id="PF00400">
    <property type="entry name" value="WD40"/>
    <property type="match status" value="4"/>
</dbReference>
<dbReference type="SMART" id="SM00320">
    <property type="entry name" value="WD40"/>
    <property type="match status" value="6"/>
</dbReference>
<dbReference type="SUPFAM" id="SSF50978">
    <property type="entry name" value="WD40 repeat-like"/>
    <property type="match status" value="1"/>
</dbReference>
<dbReference type="PROSITE" id="PS00678">
    <property type="entry name" value="WD_REPEATS_1"/>
    <property type="match status" value="1"/>
</dbReference>
<dbReference type="PROSITE" id="PS50082">
    <property type="entry name" value="WD_REPEATS_2"/>
    <property type="match status" value="2"/>
</dbReference>
<dbReference type="PROSITE" id="PS50294">
    <property type="entry name" value="WD_REPEATS_REGION"/>
    <property type="match status" value="1"/>
</dbReference>
<proteinExistence type="evidence at transcript level"/>
<reference key="1">
    <citation type="journal article" date="2004" name="Proc. Natl. Acad. Sci. U.S.A.">
        <title>Hematopoietic gene expression profile in zebrafish kidney marrow.</title>
        <authorList>
            <person name="Song H.-D."/>
            <person name="Sun X.-J."/>
            <person name="Deng M."/>
            <person name="Zhang G.-W."/>
            <person name="Zhou Y."/>
            <person name="Wu X.-Y."/>
            <person name="Sheng Y."/>
            <person name="Chen Y."/>
            <person name="Ruan Z."/>
            <person name="Jiang C.-L."/>
            <person name="Fan H.-Y."/>
            <person name="Zon L.I."/>
            <person name="Kanki J.P."/>
            <person name="Liu T.X."/>
            <person name="Look A.T."/>
            <person name="Chen Z."/>
        </authorList>
    </citation>
    <scope>NUCLEOTIDE SEQUENCE [LARGE SCALE MRNA]</scope>
    <source>
        <tissue>Kidney marrow</tissue>
    </source>
</reference>
<reference key="2">
    <citation type="submission" date="2003-01" db="EMBL/GenBank/DDBJ databases">
        <authorList>
            <consortium name="NIH - Zebrafish Gene Collection (ZGC) project"/>
        </authorList>
    </citation>
    <scope>NUCLEOTIDE SEQUENCE [LARGE SCALE MRNA]</scope>
    <source>
        <strain>AB</strain>
    </source>
</reference>
<accession>Q7ZW33</accession>
<accession>Q6TGY5</accession>
<feature type="chain" id="PRO_0000051325" description="U3 small nucleolar RNA-associated protein 15 homolog">
    <location>
        <begin position="1"/>
        <end position="517"/>
    </location>
</feature>
<feature type="repeat" description="WD 1">
    <location>
        <begin position="36"/>
        <end position="75"/>
    </location>
</feature>
<feature type="repeat" description="WD 2">
    <location>
        <begin position="78"/>
        <end position="117"/>
    </location>
</feature>
<feature type="repeat" description="WD 3">
    <location>
        <begin position="120"/>
        <end position="159"/>
    </location>
</feature>
<feature type="repeat" description="WD 4">
    <location>
        <begin position="162"/>
        <end position="202"/>
    </location>
</feature>
<feature type="repeat" description="WD 5">
    <location>
        <begin position="204"/>
        <end position="242"/>
    </location>
</feature>
<feature type="repeat" description="WD 6">
    <location>
        <begin position="246"/>
        <end position="285"/>
    </location>
</feature>
<feature type="repeat" description="WD 7">
    <location>
        <begin position="287"/>
        <end position="324"/>
    </location>
</feature>
<feature type="sequence conflict" description="In Ref. 1; AAQ97804." evidence="3" ref="1">
    <original>G</original>
    <variation>GV</variation>
    <location>
        <position position="504"/>
    </location>
</feature>
<comment type="function">
    <text evidence="2">Ribosome biogenesis factor. Involved in nucleolar processing of pre-18S ribosomal RNA. Required for optimal pre-ribosomal RNA transcription by RNA polymerase I. Part of the small subunit (SSU) processome, first precursor of the small eukaryotic ribosomal subunit. During the assembly of the SSU processome in the nucleolus, many ribosome biogenesis factors, an RNA chaperone and ribosomal proteins associate with the nascent pre-rRNA and work in concert to generate RNA folding, modifications, rearrangements and cleavage as well as targeted degradation of pre-ribosomal RNA by the RNA exosome.</text>
</comment>
<comment type="subunit">
    <text evidence="2">Part of the small subunit (SSU) processome, composed of more than 70 proteins and the RNA chaperone small nucleolar RNA (snoRNA) U3. May be a component of the proposed t-UTP subcomplex of the ribosomal small subunit (SSU) processome.</text>
</comment>
<comment type="subcellular location">
    <subcellularLocation>
        <location evidence="1">Nucleus</location>
        <location evidence="1">Nucleolus</location>
    </subcellularLocation>
</comment>
<keyword id="KW-0539">Nucleus</keyword>
<keyword id="KW-1185">Reference proteome</keyword>
<keyword id="KW-0677">Repeat</keyword>
<keyword id="KW-0698">rRNA processing</keyword>
<keyword id="KW-0853">WD repeat</keyword>
<sequence length="517" mass="57726">MASFKPTKVLSYPKLGEKVTEETLYWKNYKPPVQIKEFGAVSKIDFSPLPPHNYAVTASTRVHIYGLHSQEPIRNFTRFHDTAYGGSFRGDGKLLVAGSEEGLIRLFDIGGRVSLRQFKGHSKAVHATSFLSDGFRVLSGSDDLTCRVWDVASAVELSSITEHTDYIRAIAPSKLNPDVFVTGSYDHTVKMFDVRSGNSVMTMQHGQPVECVLLYPSEALLVSTGGRYVKVWDLLKGGQQLVSLKNHHKTVTCACLSSSNKLLTASLDRHVKVYNSSYKVVHNFDCASSILSLAVAPDDEAVAVGMTNGVLSIRHRKHKEEKEALTGRRKRGPSYRFFVKGKNFVPRQDDFLVSKPVRQHLQKYDKQLKRFEVSKALDTALETWTRTTKPEVTVAVIMELNRRGTLKNALAGRDEVSLTKILNFLLKHITDPRFSRPLLTVGDIVLDLYQQVIPQSPVVERLLQRLYEILGREAELQQELLQVLGILDTLFASLMPRKEVASFGAAAAAQESQLQAA</sequence>
<gene>
    <name type="primary">utp15</name>
</gene>
<organism>
    <name type="scientific">Danio rerio</name>
    <name type="common">Zebrafish</name>
    <name type="synonym">Brachydanio rerio</name>
    <dbReference type="NCBI Taxonomy" id="7955"/>
    <lineage>
        <taxon>Eukaryota</taxon>
        <taxon>Metazoa</taxon>
        <taxon>Chordata</taxon>
        <taxon>Craniata</taxon>
        <taxon>Vertebrata</taxon>
        <taxon>Euteleostomi</taxon>
        <taxon>Actinopterygii</taxon>
        <taxon>Neopterygii</taxon>
        <taxon>Teleostei</taxon>
        <taxon>Ostariophysi</taxon>
        <taxon>Cypriniformes</taxon>
        <taxon>Danionidae</taxon>
        <taxon>Danioninae</taxon>
        <taxon>Danio</taxon>
    </lineage>
</organism>
<protein>
    <recommendedName>
        <fullName>U3 small nucleolar RNA-associated protein 15 homolog</fullName>
    </recommendedName>
</protein>
<evidence type="ECO:0000250" key="1"/>
<evidence type="ECO:0000250" key="2">
    <source>
        <dbReference type="UniProtKB" id="Q8TED0"/>
    </source>
</evidence>
<evidence type="ECO:0000305" key="3"/>
<name>UTP15_DANRE</name>